<feature type="chain" id="PRO_0000332381" description="Cobyric acid synthase">
    <location>
        <begin position="1"/>
        <end position="481"/>
    </location>
</feature>
<feature type="domain" description="GATase cobBQ-type" evidence="1">
    <location>
        <begin position="248"/>
        <end position="435"/>
    </location>
</feature>
<feature type="active site" description="Nucleophile" evidence="1">
    <location>
        <position position="330"/>
    </location>
</feature>
<feature type="active site" evidence="1">
    <location>
        <position position="427"/>
    </location>
</feature>
<reference key="1">
    <citation type="submission" date="2007-04" db="EMBL/GenBank/DDBJ databases">
        <title>Complete sequence of chromosome of Rhodobacter sphaeroides ATCC 17025.</title>
        <authorList>
            <consortium name="US DOE Joint Genome Institute"/>
            <person name="Copeland A."/>
            <person name="Lucas S."/>
            <person name="Lapidus A."/>
            <person name="Barry K."/>
            <person name="Detter J.C."/>
            <person name="Glavina del Rio T."/>
            <person name="Hammon N."/>
            <person name="Israni S."/>
            <person name="Dalin E."/>
            <person name="Tice H."/>
            <person name="Pitluck S."/>
            <person name="Chertkov O."/>
            <person name="Brettin T."/>
            <person name="Bruce D."/>
            <person name="Han C."/>
            <person name="Schmutz J."/>
            <person name="Larimer F."/>
            <person name="Land M."/>
            <person name="Hauser L."/>
            <person name="Kyrpides N."/>
            <person name="Kim E."/>
            <person name="Richardson P."/>
            <person name="Mackenzie C."/>
            <person name="Choudhary M."/>
            <person name="Donohue T.J."/>
            <person name="Kaplan S."/>
        </authorList>
    </citation>
    <scope>NUCLEOTIDE SEQUENCE [LARGE SCALE GENOMIC DNA]</scope>
    <source>
        <strain>ATCC 17025 / ATH 2.4.3</strain>
    </source>
</reference>
<evidence type="ECO:0000255" key="1">
    <source>
        <dbReference type="HAMAP-Rule" id="MF_00028"/>
    </source>
</evidence>
<name>COBQ_CERS5</name>
<sequence length="481" mass="50888">MPAVMIQGTGSDVGKSLLVAGLCRAARRRGLSVAPFKPQNMSNNAAVTADGGEIGRAQALQARAAGLEPMTDMNPVLLKPESDQGSQVIVQGRRVGTLRARDWFERKPSLMAPVLESFGRLTAAHDLVIVEGAGSPAEVNLRRGDIANMGFARAANVPVVLAGDIDRGGVIAQIVGTQAVIDPEDAAMVAGFLVNKFRGDVRLFDEGYRLIEDRTGWRGYGVVPFFPQAALLPAEDALDLGRPTGQGALTVAWLAFSRVANFDDLDPLKQEPGLTVVMVRPGQPIPAEAGLVILPGTKSTRGDLAFLRAQGWDVDLLAHHRRGGRVLGICGGYQMLGRTVADPQGLEGEPGATEGLGLLDVTTVMHPDKRLTRVEGRHVASGEPLSGYEIHIGATDGPDCARPFAEVDGRPEGAGSPDGRVTGSYLHGMFGSDRFRAAFLRSLGARTSDLAYDARVETVLDSLADHLEAHLDVAGLLALAR</sequence>
<proteinExistence type="inferred from homology"/>
<dbReference type="EMBL" id="CP000661">
    <property type="protein sequence ID" value="ABP69290.1"/>
    <property type="molecule type" value="Genomic_DNA"/>
</dbReference>
<dbReference type="SMR" id="A4WPH6"/>
<dbReference type="STRING" id="349102.Rsph17025_0384"/>
<dbReference type="KEGG" id="rsq:Rsph17025_0384"/>
<dbReference type="eggNOG" id="COG1492">
    <property type="taxonomic scope" value="Bacteria"/>
</dbReference>
<dbReference type="HOGENOM" id="CLU_019250_2_2_5"/>
<dbReference type="BioCyc" id="RSPH349102:G1G8M-391-MONOMER"/>
<dbReference type="UniPathway" id="UPA00148"/>
<dbReference type="GO" id="GO:0015420">
    <property type="term" value="F:ABC-type vitamin B12 transporter activity"/>
    <property type="evidence" value="ECO:0007669"/>
    <property type="project" value="UniProtKB-UniRule"/>
</dbReference>
<dbReference type="GO" id="GO:0003824">
    <property type="term" value="F:catalytic activity"/>
    <property type="evidence" value="ECO:0007669"/>
    <property type="project" value="InterPro"/>
</dbReference>
<dbReference type="GO" id="GO:0009236">
    <property type="term" value="P:cobalamin biosynthetic process"/>
    <property type="evidence" value="ECO:0007669"/>
    <property type="project" value="UniProtKB-UniRule"/>
</dbReference>
<dbReference type="CDD" id="cd05389">
    <property type="entry name" value="CobQ_N"/>
    <property type="match status" value="1"/>
</dbReference>
<dbReference type="CDD" id="cd01750">
    <property type="entry name" value="GATase1_CobQ"/>
    <property type="match status" value="1"/>
</dbReference>
<dbReference type="Gene3D" id="3.40.50.880">
    <property type="match status" value="1"/>
</dbReference>
<dbReference type="Gene3D" id="3.40.50.300">
    <property type="entry name" value="P-loop containing nucleotide triphosphate hydrolases"/>
    <property type="match status" value="1"/>
</dbReference>
<dbReference type="HAMAP" id="MF_00028">
    <property type="entry name" value="CobQ"/>
    <property type="match status" value="1"/>
</dbReference>
<dbReference type="InterPro" id="IPR029062">
    <property type="entry name" value="Class_I_gatase-like"/>
</dbReference>
<dbReference type="InterPro" id="IPR002586">
    <property type="entry name" value="CobQ/CobB/MinD/ParA_Nub-bd_dom"/>
</dbReference>
<dbReference type="InterPro" id="IPR033949">
    <property type="entry name" value="CobQ_GATase1"/>
</dbReference>
<dbReference type="InterPro" id="IPR047045">
    <property type="entry name" value="CobQ_N"/>
</dbReference>
<dbReference type="InterPro" id="IPR004459">
    <property type="entry name" value="CobQ_synth"/>
</dbReference>
<dbReference type="InterPro" id="IPR011698">
    <property type="entry name" value="GATase_3"/>
</dbReference>
<dbReference type="InterPro" id="IPR027417">
    <property type="entry name" value="P-loop_NTPase"/>
</dbReference>
<dbReference type="NCBIfam" id="TIGR00313">
    <property type="entry name" value="cobQ"/>
    <property type="match status" value="1"/>
</dbReference>
<dbReference type="NCBIfam" id="NF001989">
    <property type="entry name" value="PRK00784.1"/>
    <property type="match status" value="1"/>
</dbReference>
<dbReference type="PANTHER" id="PTHR21343:SF1">
    <property type="entry name" value="COBYRIC ACID SYNTHASE"/>
    <property type="match status" value="1"/>
</dbReference>
<dbReference type="PANTHER" id="PTHR21343">
    <property type="entry name" value="DETHIOBIOTIN SYNTHETASE"/>
    <property type="match status" value="1"/>
</dbReference>
<dbReference type="Pfam" id="PF01656">
    <property type="entry name" value="CbiA"/>
    <property type="match status" value="1"/>
</dbReference>
<dbReference type="Pfam" id="PF07685">
    <property type="entry name" value="GATase_3"/>
    <property type="match status" value="1"/>
</dbReference>
<dbReference type="SUPFAM" id="SSF52317">
    <property type="entry name" value="Class I glutamine amidotransferase-like"/>
    <property type="match status" value="1"/>
</dbReference>
<dbReference type="SUPFAM" id="SSF52540">
    <property type="entry name" value="P-loop containing nucleoside triphosphate hydrolases"/>
    <property type="match status" value="1"/>
</dbReference>
<dbReference type="PROSITE" id="PS51274">
    <property type="entry name" value="GATASE_COBBQ"/>
    <property type="match status" value="1"/>
</dbReference>
<comment type="function">
    <text evidence="1">Catalyzes amidations at positions B, D, E, and G on adenosylcobyrinic A,C-diamide. NH(2) groups are provided by glutamine, and one molecule of ATP is hydrogenolyzed for each amidation.</text>
</comment>
<comment type="pathway">
    <text evidence="1">Cofactor biosynthesis; adenosylcobalamin biosynthesis.</text>
</comment>
<comment type="similarity">
    <text evidence="1">Belongs to the CobB/CobQ family. CobQ subfamily.</text>
</comment>
<organism>
    <name type="scientific">Cereibacter sphaeroides (strain ATCC 17025 / ATH 2.4.3)</name>
    <name type="common">Rhodobacter sphaeroides</name>
    <dbReference type="NCBI Taxonomy" id="349102"/>
    <lineage>
        <taxon>Bacteria</taxon>
        <taxon>Pseudomonadati</taxon>
        <taxon>Pseudomonadota</taxon>
        <taxon>Alphaproteobacteria</taxon>
        <taxon>Rhodobacterales</taxon>
        <taxon>Paracoccaceae</taxon>
        <taxon>Cereibacter</taxon>
    </lineage>
</organism>
<keyword id="KW-0169">Cobalamin biosynthesis</keyword>
<keyword id="KW-0315">Glutamine amidotransferase</keyword>
<protein>
    <recommendedName>
        <fullName evidence="1">Cobyric acid synthase</fullName>
    </recommendedName>
</protein>
<gene>
    <name evidence="1" type="primary">cobQ</name>
    <name type="ordered locus">Rsph17025_0384</name>
</gene>
<accession>A4WPH6</accession>